<comment type="function">
    <text evidence="1 5">The heterodimer glycoprotein H-glycoprotein L is required for the fusion of viral and plasma membranes leading to virus entry into the host cell. Following initial binding to host receptor, membrane fusion is mediated by the fusion machinery composed of gB and the heterodimer gH/gL. May also be involved in the fusion between the virion envelope and the outer nuclear membrane during virion morphogenesis.</text>
</comment>
<comment type="subunit">
    <text evidence="1 3 4 6 7 8 9">Interacts with glycoprotein L (gL); this interaction is necessary for the correct processing and cell surface expression of gH. The heterodimer gH/gL seems to interact with gB trimers during fusion (By similarity). Associates with the gB-gH/gL-gD complex (Probable). Interacts with VP16.</text>
</comment>
<comment type="subcellular location">
    <subcellularLocation>
        <location evidence="1">Virion membrane</location>
        <topology evidence="1">Single-pass type I membrane protein</topology>
    </subcellularLocation>
    <subcellularLocation>
        <location evidence="1">Host cell membrane</location>
        <topology evidence="1">Single-pass type I membrane protein</topology>
    </subcellularLocation>
    <subcellularLocation>
        <location evidence="1">Host endosome membrane</location>
        <topology evidence="1">Single-pass type I membrane protein</topology>
    </subcellularLocation>
    <text evidence="1">During virion morphogenesis, this protein probably accumulates in the endosomes and trans-Golgi where secondary envelopment occurs. It is probably transported to the cell surface from where it is endocytosed and directed to the trans-Golgi network (TGN).</text>
</comment>
<comment type="PTM">
    <text evidence="1 10">N-glycosylated, O-glycosylated, and sialylated.</text>
</comment>
<comment type="similarity">
    <text evidence="1">Belongs to the herpesviridae glycoprotein H family.</text>
</comment>
<sequence>MGNGLWFVGVIILGVAWGQVHDWTEQTDPWFLDGLGMDRMYWRDTNTGRLWLPNTPDPQKPPRGFLAPPDELNLTTASLPLLRWYEERFCFVLVTTAEFPRDPGQLLYIPKTYLLGRPPNASLPAPTTVEPTAQPPPSVAPLKGLLHNPAASVLLRSRAWVTFSAVPDPEALTFPRGDNVATASHPSGPRDTPPPRPPVGARRHPTTELDITHLHNASTTWLATRGLLRSPGRYVYFSPSASTWPVGIWTTGELVLGCDAALVRARYGREFMGLVISMHDSPPVEVMVVPAGQTLDRVGDPADENPPGALPGPPGGPRYRVFVLGSLTRADNGSALDALRRVGGYPEEGTNYAQFLSRAYAEFFSGDAGAEQGPRPPLFWRLTGLLATSGFAFVNAAHANGAVCLSDLLGFLAHSRALAGLAARGAAGCAADSVFFNVSVLDPTARLQLEARLQHLVAEILEREQSLALHALGYQLAFVLDSPSAYDAVAPSAAHLIDALYAEFLGGRVLTTPVVHRALFYASAVLRQPFLAGVPSAVQRERARRSLLIASALCTSDVAAATNADLRTALARADHQKTLFWLPDHFSPCAASLRFDLDESVFILDALAQATRSETPVEVLAQQTHGLASTLTRWAHYNALIRAFVPEASHRCGGQSANVEPRILVPITHNASYVVTHSPLPRGIGYKLTGVDVRRPLFLTYLTATCEGSTRDIESKRLVRTQNQRDLGLVGAVFMRYTPAGEVMSVLLVDTDNTQQQIAAGPTEGAPSVFSSDVPSTALLLFPNGTVIHLLAFDTQPVAAIAPGFLAASALGVVMITAALAGILKVLRTSVPFFWRRE</sequence>
<evidence type="ECO:0000255" key="1">
    <source>
        <dbReference type="HAMAP-Rule" id="MF_04033"/>
    </source>
</evidence>
<evidence type="ECO:0000256" key="2">
    <source>
        <dbReference type="SAM" id="MobiDB-lite"/>
    </source>
</evidence>
<evidence type="ECO:0000269" key="3">
    <source>
    </source>
</evidence>
<evidence type="ECO:0000269" key="4">
    <source>
    </source>
</evidence>
<evidence type="ECO:0000269" key="5">
    <source>
    </source>
</evidence>
<evidence type="ECO:0000269" key="6">
    <source>
    </source>
</evidence>
<evidence type="ECO:0000269" key="7">
    <source>
    </source>
</evidence>
<evidence type="ECO:0000269" key="8">
    <source>
    </source>
</evidence>
<evidence type="ECO:0000305" key="9"/>
<evidence type="ECO:0000305" key="10">
    <source>
    </source>
</evidence>
<evidence type="ECO:0007829" key="11">
    <source>
        <dbReference type="PDB" id="2LQY"/>
    </source>
</evidence>
<feature type="signal peptide" evidence="1">
    <location>
        <begin position="1"/>
        <end position="18"/>
    </location>
</feature>
<feature type="chain" id="PRO_0000436656" description="Envelope glycoprotein H" evidence="1">
    <location>
        <begin position="19"/>
        <end position="838"/>
    </location>
</feature>
<feature type="topological domain" description="Virion surface" evidence="1">
    <location>
        <begin position="19"/>
        <end position="803"/>
    </location>
</feature>
<feature type="transmembrane region" description="Helical" evidence="1">
    <location>
        <begin position="804"/>
        <end position="824"/>
    </location>
</feature>
<feature type="topological domain" description="Intravirion" evidence="1">
    <location>
        <begin position="825"/>
        <end position="838"/>
    </location>
</feature>
<feature type="region of interest" description="Disordered" evidence="2">
    <location>
        <begin position="174"/>
        <end position="204"/>
    </location>
</feature>
<feature type="region of interest" description="Interaction with gL" evidence="1">
    <location>
        <begin position="259"/>
        <end position="323"/>
    </location>
</feature>
<feature type="glycosylation site" description="N-linked (GlcNAc...) asparagine; by host" evidence="1">
    <location>
        <position position="73"/>
    </location>
</feature>
<feature type="glycosylation site" description="N-linked (GlcNAc...) asparagine; by host" evidence="1">
    <location>
        <position position="120"/>
    </location>
</feature>
<feature type="glycosylation site" description="N-linked (GlcNAc...) asparagine; by host" evidence="1">
    <location>
        <position position="216"/>
    </location>
</feature>
<feature type="glycosylation site" description="N-linked (GlcNAc...) asparagine; by host" evidence="1">
    <location>
        <position position="332"/>
    </location>
</feature>
<feature type="glycosylation site" description="N-linked (GlcNAc...) asparagine; by host" evidence="1">
    <location>
        <position position="437"/>
    </location>
</feature>
<feature type="glycosylation site" description="N-linked (GlcNAc...) asparagine; by host" evidence="1">
    <location>
        <position position="670"/>
    </location>
</feature>
<feature type="glycosylation site" description="N-linked (GlcNAc...) asparagine; by host" evidence="1">
    <location>
        <position position="784"/>
    </location>
</feature>
<feature type="sequence variant" description="In strain: Nonneuroinvasive mutant HF10.">
    <original>V</original>
    <variation>A</variation>
    <location>
        <position position="15"/>
    </location>
</feature>
<feature type="sequence variant" description="In strain: Nonneuroinvasive mutant HF10.">
    <original>S</original>
    <variation>A</variation>
    <location>
        <position position="138"/>
    </location>
</feature>
<feature type="sequence variant" description="In strain: Nonneuroinvasive mutant HF10.">
    <original>A</original>
    <variation>T</variation>
    <location>
        <position position="150"/>
    </location>
</feature>
<feature type="sequence variant" description="In strain: Nonneuroinvasive mutant HF10.">
    <original>V</original>
    <variation>A</variation>
    <location>
        <position position="284"/>
    </location>
</feature>
<feature type="helix" evidence="11">
    <location>
        <begin position="627"/>
        <end position="633"/>
    </location>
</feature>
<feature type="helix" evidence="11">
    <location>
        <begin position="634"/>
        <end position="636"/>
    </location>
</feature>
<feature type="helix" evidence="11">
    <location>
        <begin position="638"/>
        <end position="641"/>
    </location>
</feature>
<protein>
    <recommendedName>
        <fullName evidence="1">Envelope glycoprotein H</fullName>
        <shortName evidence="1">gH</shortName>
    </recommendedName>
</protein>
<reference key="1">
    <citation type="journal article" date="1986" name="Nucleic Acids Res.">
        <title>DNA sequence of the herpes simplex virus type 1 gene encoding glycoprotein gH, and identification of homologues in the genomes of varicella-zoster virus and Epstein-Barr virus.</title>
        <authorList>
            <person name="McGeoch D.J."/>
            <person name="Davison A.J."/>
        </authorList>
    </citation>
    <scope>NUCLEOTIDE SEQUENCE [GENOMIC DNA]</scope>
</reference>
<reference key="2">
    <citation type="journal article" date="1988" name="J. Gen. Virol.">
        <title>The complete DNA sequence of the long unique region in the genome of herpes simplex virus type 1.</title>
        <authorList>
            <person name="McGeoch D.J."/>
            <person name="Dalrymple M.A."/>
            <person name="Davison A.J."/>
            <person name="Dolan A."/>
            <person name="Frame M.C."/>
            <person name="McNab D."/>
            <person name="Perry L.J."/>
            <person name="Scott J.E."/>
            <person name="Taylor P."/>
        </authorList>
    </citation>
    <scope>NUCLEOTIDE SEQUENCE [LARGE SCALE GENOMIC DNA]</scope>
</reference>
<reference key="3">
    <citation type="journal article" date="2007" name="Microbes Infect.">
        <title>Determination and analysis of the DNA sequence of highly attenuated herpes simplex virus type 1 mutant HF10, a potential oncolytic virus.</title>
        <authorList>
            <person name="Ushijima Y."/>
            <person name="Luo C."/>
            <person name="Goshima F."/>
            <person name="Yamauchi Y."/>
            <person name="Kimura H."/>
            <person name="Nishiyama Y."/>
        </authorList>
    </citation>
    <scope>NUCLEOTIDE SEQUENCE [LARGE SCALE GENOMIC DNA]</scope>
    <source>
        <strain>Nonneuroinvasive mutant HF10</strain>
    </source>
</reference>
<reference key="4">
    <citation type="submission" date="2008-12" db="EMBL/GenBank/DDBJ databases">
        <title>Herpes simplex virus type 1 bacterial artificial chromosome.</title>
        <authorList>
            <person name="Cunningham C."/>
            <person name="Davison A.J."/>
        </authorList>
    </citation>
    <scope>NUCLEOTIDE SEQUENCE [LARGE SCALE GENOMIC DNA]</scope>
    <source>
        <strain>17 syn+</strain>
    </source>
</reference>
<reference key="5">
    <citation type="journal article" date="1998" name="J. Virol.">
        <title>Structural and antigenic analysis of a truncated form of the herpes simplex virus glycoprotein gH-gL complex.</title>
        <authorList>
            <person name="Peng T."/>
            <person name="Ponce de Leon M."/>
            <person name="Novotny M.J."/>
            <person name="Jiang H."/>
            <person name="Lambris J.D."/>
            <person name="Dubin G."/>
            <person name="Spear P.G."/>
            <person name="Cohen G.H."/>
            <person name="Eisenberg R.J."/>
        </authorList>
    </citation>
    <scope>INTERACTION WITH GL</scope>
    <scope>GLYCOSYLATION</scope>
    <source>
        <strain>KOS</strain>
    </source>
</reference>
<reference key="6">
    <citation type="journal article" date="2003" name="J. Virol.">
        <title>Structure-function analysis of herpes simplex virus type 1 gD and gH-gL: clues from gDgH chimeras.</title>
        <authorList>
            <person name="Cairns T.M."/>
            <person name="Milne R.S."/>
            <person name="Ponce-de-Leon M."/>
            <person name="Tobin D.K."/>
            <person name="Cohen G.H."/>
            <person name="Eisenberg R.J."/>
        </authorList>
    </citation>
    <scope>INTERACTION WITH GL</scope>
</reference>
<reference key="7">
    <citation type="journal article" date="2003" name="Virology">
        <title>The cytoplasmic tail of Herpes simplex virus glycoprotein H binds to the tegument protein VP16 in vitro and in vivo.</title>
        <authorList>
            <person name="Gross S.T."/>
            <person name="Harley C.A."/>
            <person name="Wilson D.W."/>
        </authorList>
    </citation>
    <scope>INTERACTION WITH VP16</scope>
    <source>
        <strain>SC16</strain>
    </source>
</reference>
<reference key="8">
    <citation type="journal article" date="2007" name="Proc. Natl. Acad. Sci. U.S.A.">
        <title>Herpes simplex virus glycoproteins gB and gH function in fusion between the virion envelope and the outer nuclear membrane.</title>
        <authorList>
            <person name="Farnsworth A."/>
            <person name="Wisner T.W."/>
            <person name="Webb M."/>
            <person name="Roller R.J."/>
            <person name="Cohen G.H."/>
            <person name="Eisenberg R.J."/>
            <person name="Johnson D.C."/>
        </authorList>
    </citation>
    <scope>FUNCTION</scope>
</reference>
<reference key="9">
    <citation type="journal article" date="2007" name="J. Virol.">
        <title>Complexes between herpes simplex virus glycoproteins gD, gB, and gH detected in cells by complementation of split enhanced green fluorescent protein.</title>
        <authorList>
            <person name="Avitabile E."/>
            <person name="Forghieri C."/>
            <person name="Campadelli-Fiume G."/>
        </authorList>
    </citation>
    <scope>IDENTIFICATION IN A COMPLEX WITH GB AND GD</scope>
</reference>
<reference key="10">
    <citation type="journal article" date="2007" name="Proc. Natl. Acad. Sci. U.S.A.">
        <title>Bimolecular complementation reveals that glycoproteins gB and gH/gL of herpes simplex virus interact with each other during cell fusion.</title>
        <authorList>
            <person name="Atanasiu D."/>
            <person name="Whitbeck J.C."/>
            <person name="Cairns T.M."/>
            <person name="Reilly B."/>
            <person name="Cohen G.H."/>
            <person name="Eisenberg R.J."/>
        </authorList>
    </citation>
    <scope>INTERACTION OF GH/GL HETERODIMER WITH GB</scope>
    <source>
        <strain>KOS</strain>
    </source>
</reference>
<dbReference type="EMBL" id="X03896">
    <property type="protein sequence ID" value="CAA27534.1"/>
    <property type="molecule type" value="Genomic_DNA"/>
</dbReference>
<dbReference type="EMBL" id="X14112">
    <property type="protein sequence ID" value="CAA32335.1"/>
    <property type="molecule type" value="Genomic_DNA"/>
</dbReference>
<dbReference type="EMBL" id="DQ889502">
    <property type="protein sequence ID" value="ABI63484.1"/>
    <property type="molecule type" value="Genomic_DNA"/>
</dbReference>
<dbReference type="EMBL" id="FJ593289">
    <property type="protein sequence ID" value="ACM62244.1"/>
    <property type="molecule type" value="Genomic_DNA"/>
</dbReference>
<dbReference type="PIR" id="A24018">
    <property type="entry name" value="VGBEG1"/>
</dbReference>
<dbReference type="RefSeq" id="YP_009137096.1">
    <property type="nucleotide sequence ID" value="NC_001806.2"/>
</dbReference>
<dbReference type="PDB" id="2LQY">
    <property type="method" value="NMR"/>
    <property type="chains" value="A=625-644"/>
</dbReference>
<dbReference type="PDBsum" id="2LQY"/>
<dbReference type="BMRB" id="P06477"/>
<dbReference type="SMR" id="P06477"/>
<dbReference type="BioGRID" id="971414">
    <property type="interactions" value="1"/>
</dbReference>
<dbReference type="ChEMBL" id="CHEMBL2364696"/>
<dbReference type="DrugCentral" id="P06477"/>
<dbReference type="TCDB" id="1.G.10.1.1">
    <property type="family name" value="the herpes simplex virus membrane fusion complex (hsv-mfc) family"/>
</dbReference>
<dbReference type="GlyCosmos" id="P06477">
    <property type="glycosylation" value="7 sites, No reported glycans"/>
</dbReference>
<dbReference type="GeneID" id="24271466"/>
<dbReference type="KEGG" id="vg:24271466"/>
<dbReference type="EvolutionaryTrace" id="P06477"/>
<dbReference type="PRO" id="PR:P06477"/>
<dbReference type="Proteomes" id="UP000009294">
    <property type="component" value="Segment"/>
</dbReference>
<dbReference type="Proteomes" id="UP000180652">
    <property type="component" value="Segment"/>
</dbReference>
<dbReference type="GO" id="GO:0044175">
    <property type="term" value="C:host cell endosome membrane"/>
    <property type="evidence" value="ECO:0007669"/>
    <property type="project" value="UniProtKB-SubCell"/>
</dbReference>
<dbReference type="GO" id="GO:0020002">
    <property type="term" value="C:host cell plasma membrane"/>
    <property type="evidence" value="ECO:0007669"/>
    <property type="project" value="UniProtKB-SubCell"/>
</dbReference>
<dbReference type="GO" id="GO:0016020">
    <property type="term" value="C:membrane"/>
    <property type="evidence" value="ECO:0007669"/>
    <property type="project" value="UniProtKB-KW"/>
</dbReference>
<dbReference type="GO" id="GO:0019031">
    <property type="term" value="C:viral envelope"/>
    <property type="evidence" value="ECO:0007669"/>
    <property type="project" value="UniProtKB-KW"/>
</dbReference>
<dbReference type="GO" id="GO:0055036">
    <property type="term" value="C:virion membrane"/>
    <property type="evidence" value="ECO:0007669"/>
    <property type="project" value="UniProtKB-SubCell"/>
</dbReference>
<dbReference type="GO" id="GO:0019064">
    <property type="term" value="P:fusion of virus membrane with host plasma membrane"/>
    <property type="evidence" value="ECO:0007669"/>
    <property type="project" value="UniProtKB-KW"/>
</dbReference>
<dbReference type="GO" id="GO:0046718">
    <property type="term" value="P:symbiont entry into host cell"/>
    <property type="evidence" value="ECO:0007669"/>
    <property type="project" value="UniProtKB-KW"/>
</dbReference>
<dbReference type="Gene3D" id="1.20.58.1340">
    <property type="match status" value="1"/>
</dbReference>
<dbReference type="Gene3D" id="3.10.360.40">
    <property type="match status" value="1"/>
</dbReference>
<dbReference type="Gene3D" id="3.30.500.50">
    <property type="match status" value="1"/>
</dbReference>
<dbReference type="Gene3D" id="2.60.40.3190">
    <property type="entry name" value="Herpesvirus glycoprotein H, C-terminal domain"/>
    <property type="match status" value="1"/>
</dbReference>
<dbReference type="HAMAP" id="MF_04033">
    <property type="entry name" value="HSV_GH"/>
    <property type="match status" value="1"/>
</dbReference>
<dbReference type="InterPro" id="IPR003493">
    <property type="entry name" value="Herpes_gH"/>
</dbReference>
<dbReference type="InterPro" id="IPR035305">
    <property type="entry name" value="Herpes_glycoH_C"/>
</dbReference>
<dbReference type="InterPro" id="IPR038172">
    <property type="entry name" value="Herpes_glycoH_C_sf"/>
</dbReference>
<dbReference type="Pfam" id="PF17488">
    <property type="entry name" value="Herpes_glycoH_C"/>
    <property type="match status" value="1"/>
</dbReference>
<dbReference type="Pfam" id="PF02489">
    <property type="entry name" value="Herpes_glycop_H"/>
    <property type="match status" value="1"/>
</dbReference>
<organism>
    <name type="scientific">Human herpesvirus 1 (strain 17)</name>
    <name type="common">HHV-1</name>
    <name type="synonym">Human herpes simplex virus 1</name>
    <dbReference type="NCBI Taxonomy" id="10299"/>
    <lineage>
        <taxon>Viruses</taxon>
        <taxon>Duplodnaviria</taxon>
        <taxon>Heunggongvirae</taxon>
        <taxon>Peploviricota</taxon>
        <taxon>Herviviricetes</taxon>
        <taxon>Herpesvirales</taxon>
        <taxon>Orthoherpesviridae</taxon>
        <taxon>Alphaherpesvirinae</taxon>
        <taxon>Simplexvirus</taxon>
        <taxon>Simplexvirus humanalpha1</taxon>
        <taxon>Human herpesvirus 1</taxon>
    </lineage>
</organism>
<accession>P06477</accession>
<accession>B9VQE9</accession>
<accession>Q09IB1</accession>
<keyword id="KW-0002">3D-structure</keyword>
<keyword id="KW-1169">Fusion of virus membrane with host cell membrane</keyword>
<keyword id="KW-1168">Fusion of virus membrane with host membrane</keyword>
<keyword id="KW-0325">Glycoprotein</keyword>
<keyword id="KW-1032">Host cell membrane</keyword>
<keyword id="KW-1039">Host endosome</keyword>
<keyword id="KW-1043">Host membrane</keyword>
<keyword id="KW-0472">Membrane</keyword>
<keyword id="KW-1185">Reference proteome</keyword>
<keyword id="KW-0730">Sialic acid</keyword>
<keyword id="KW-0732">Signal</keyword>
<keyword id="KW-0812">Transmembrane</keyword>
<keyword id="KW-1133">Transmembrane helix</keyword>
<keyword id="KW-0261">Viral envelope protein</keyword>
<keyword id="KW-1162">Viral penetration into host cytoplasm</keyword>
<keyword id="KW-0946">Virion</keyword>
<keyword id="KW-1160">Virus entry into host cell</keyword>
<proteinExistence type="evidence at protein level"/>
<gene>
    <name evidence="1" type="primary">gH</name>
    <name type="ORF">UL22</name>
</gene>
<organismHost>
    <name type="scientific">Homo sapiens</name>
    <name type="common">Human</name>
    <dbReference type="NCBI Taxonomy" id="9606"/>
</organismHost>
<name>GH_HHV11</name>